<name>THRC1_ARATH</name>
<comment type="function">
    <text evidence="2">Catalyzes the gamma-elimination of phosphate from L-phosphohomoserine and the beta-addition of water to produce L-threonine.</text>
</comment>
<comment type="catalytic activity">
    <reaction evidence="2">
        <text>O-phospho-L-homoserine + H2O = L-threonine + phosphate</text>
        <dbReference type="Rhea" id="RHEA:10840"/>
        <dbReference type="ChEBI" id="CHEBI:15377"/>
        <dbReference type="ChEBI" id="CHEBI:43474"/>
        <dbReference type="ChEBI" id="CHEBI:57590"/>
        <dbReference type="ChEBI" id="CHEBI:57926"/>
        <dbReference type="EC" id="4.2.3.1"/>
    </reaction>
</comment>
<comment type="cofactor">
    <cofactor>
        <name>pyridoxal 5'-phosphate</name>
        <dbReference type="ChEBI" id="CHEBI:597326"/>
    </cofactor>
</comment>
<comment type="activity regulation">
    <text evidence="2">Allosterically activated by S-adenosyl-L-methionine (SAM). Activated by S-adenosyl-L-ethionine, 5'-amino-5'-deoxyadenosine, sinefungin and 5'-deoxy-5-methylthioadenosine. Inhibited by AMP.</text>
</comment>
<comment type="biophysicochemical properties">
    <kinetics>
        <KM evidence="2">30 uM for O-phospho-L-homoserine (in presence of 100 uM S-adenosyl-L-methionine)</KM>
        <KM evidence="2">120 uM for O-phospho-L-homoserine (in absence of 100 uM S-adenosyl-L-methionine)</KM>
    </kinetics>
</comment>
<comment type="pathway">
    <text>Amino-acid biosynthesis; L-threonine biosynthesis; L-threonine from L-aspartate: step 5/5.</text>
</comment>
<comment type="subunit">
    <text evidence="2 4">Homodimer.</text>
</comment>
<comment type="subcellular location">
    <subcellularLocation>
        <location>Plastid</location>
        <location>Chloroplast</location>
    </subcellularLocation>
</comment>
<comment type="domain">
    <text>The N-terminal domain (1-77) is essential for regulation by S-adenosyl-L-methionine and AMP, but not for dimerization.</text>
</comment>
<comment type="miscellaneous">
    <text>Binds 4 S-adenosyl-L-methionine (SAM) molecules per dimer. Although SAM3 and SAM4 have equivalent positions, their interactions with the protein are not identical. SAM3 interacts with Lys-181 and Asn-187 of monomer B, whereas SAM4 interacts only with Lys-181 of monomer A.</text>
</comment>
<comment type="miscellaneous">
    <text>Much more active than TS2 at physiological concentrations of S-adenosyl-L-methionine (20 uM).</text>
</comment>
<comment type="similarity">
    <text evidence="5">Belongs to the threonine synthase family.</text>
</comment>
<reference key="1">
    <citation type="online journal article" date="1999" name="Plant Gene Register">
        <title>Genomic nucleotide sequence of the Arabidopsis threonine synthase gene.</title>
        <authorList>
            <person name="Bartlem D."/>
            <person name="Tamaki Y."/>
            <person name="Naito S."/>
        </authorList>
        <locator>PGR99-108</locator>
    </citation>
    <scope>NUCLEOTIDE SEQUENCE [GENOMIC DNA]</scope>
    <source>
        <strain>cv. Wassilewskija</strain>
    </source>
</reference>
<reference key="2">
    <citation type="journal article" date="1999" name="Nature">
        <title>Sequence and analysis of chromosome 4 of the plant Arabidopsis thaliana.</title>
        <authorList>
            <person name="Mayer K.F.X."/>
            <person name="Schueller C."/>
            <person name="Wambutt R."/>
            <person name="Murphy G."/>
            <person name="Volckaert G."/>
            <person name="Pohl T."/>
            <person name="Duesterhoeft A."/>
            <person name="Stiekema W."/>
            <person name="Entian K.-D."/>
            <person name="Terryn N."/>
            <person name="Harris B."/>
            <person name="Ansorge W."/>
            <person name="Brandt P."/>
            <person name="Grivell L.A."/>
            <person name="Rieger M."/>
            <person name="Weichselgartner M."/>
            <person name="de Simone V."/>
            <person name="Obermaier B."/>
            <person name="Mache R."/>
            <person name="Mueller M."/>
            <person name="Kreis M."/>
            <person name="Delseny M."/>
            <person name="Puigdomenech P."/>
            <person name="Watson M."/>
            <person name="Schmidtheini T."/>
            <person name="Reichert B."/>
            <person name="Portetelle D."/>
            <person name="Perez-Alonso M."/>
            <person name="Boutry M."/>
            <person name="Bancroft I."/>
            <person name="Vos P."/>
            <person name="Hoheisel J."/>
            <person name="Zimmermann W."/>
            <person name="Wedler H."/>
            <person name="Ridley P."/>
            <person name="Langham S.-A."/>
            <person name="McCullagh B."/>
            <person name="Bilham L."/>
            <person name="Robben J."/>
            <person name="van der Schueren J."/>
            <person name="Grymonprez B."/>
            <person name="Chuang Y.-J."/>
            <person name="Vandenbussche F."/>
            <person name="Braeken M."/>
            <person name="Weltjens I."/>
            <person name="Voet M."/>
            <person name="Bastiaens I."/>
            <person name="Aert R."/>
            <person name="Defoor E."/>
            <person name="Weitzenegger T."/>
            <person name="Bothe G."/>
            <person name="Ramsperger U."/>
            <person name="Hilbert H."/>
            <person name="Braun M."/>
            <person name="Holzer E."/>
            <person name="Brandt A."/>
            <person name="Peters S."/>
            <person name="van Staveren M."/>
            <person name="Dirkse W."/>
            <person name="Mooijman P."/>
            <person name="Klein Lankhorst R."/>
            <person name="Rose M."/>
            <person name="Hauf J."/>
            <person name="Koetter P."/>
            <person name="Berneiser S."/>
            <person name="Hempel S."/>
            <person name="Feldpausch M."/>
            <person name="Lamberth S."/>
            <person name="Van den Daele H."/>
            <person name="De Keyser A."/>
            <person name="Buysshaert C."/>
            <person name="Gielen J."/>
            <person name="Villarroel R."/>
            <person name="De Clercq R."/>
            <person name="van Montagu M."/>
            <person name="Rogers J."/>
            <person name="Cronin A."/>
            <person name="Quail M.A."/>
            <person name="Bray-Allen S."/>
            <person name="Clark L."/>
            <person name="Doggett J."/>
            <person name="Hall S."/>
            <person name="Kay M."/>
            <person name="Lennard N."/>
            <person name="McLay K."/>
            <person name="Mayes R."/>
            <person name="Pettett A."/>
            <person name="Rajandream M.A."/>
            <person name="Lyne M."/>
            <person name="Benes V."/>
            <person name="Rechmann S."/>
            <person name="Borkova D."/>
            <person name="Bloecker H."/>
            <person name="Scharfe M."/>
            <person name="Grimm M."/>
            <person name="Loehnert T.-H."/>
            <person name="Dose S."/>
            <person name="de Haan M."/>
            <person name="Maarse A.C."/>
            <person name="Schaefer M."/>
            <person name="Mueller-Auer S."/>
            <person name="Gabel C."/>
            <person name="Fuchs M."/>
            <person name="Fartmann B."/>
            <person name="Granderath K."/>
            <person name="Dauner D."/>
            <person name="Herzl A."/>
            <person name="Neumann S."/>
            <person name="Argiriou A."/>
            <person name="Vitale D."/>
            <person name="Liguori R."/>
            <person name="Piravandi E."/>
            <person name="Massenet O."/>
            <person name="Quigley F."/>
            <person name="Clabauld G."/>
            <person name="Muendlein A."/>
            <person name="Felber R."/>
            <person name="Schnabl S."/>
            <person name="Hiller R."/>
            <person name="Schmidt W."/>
            <person name="Lecharny A."/>
            <person name="Aubourg S."/>
            <person name="Chefdor F."/>
            <person name="Cooke R."/>
            <person name="Berger C."/>
            <person name="Monfort A."/>
            <person name="Casacuberta E."/>
            <person name="Gibbons T."/>
            <person name="Weber N."/>
            <person name="Vandenbol M."/>
            <person name="Bargues M."/>
            <person name="Terol J."/>
            <person name="Torres A."/>
            <person name="Perez-Perez A."/>
            <person name="Purnelle B."/>
            <person name="Bent E."/>
            <person name="Johnson S."/>
            <person name="Tacon D."/>
            <person name="Jesse T."/>
            <person name="Heijnen L."/>
            <person name="Schwarz S."/>
            <person name="Scholler P."/>
            <person name="Heber S."/>
            <person name="Francs P."/>
            <person name="Bielke C."/>
            <person name="Frishman D."/>
            <person name="Haase D."/>
            <person name="Lemcke K."/>
            <person name="Mewes H.-W."/>
            <person name="Stocker S."/>
            <person name="Zaccaria P."/>
            <person name="Bevan M."/>
            <person name="Wilson R.K."/>
            <person name="de la Bastide M."/>
            <person name="Habermann K."/>
            <person name="Parnell L."/>
            <person name="Dedhia N."/>
            <person name="Gnoj L."/>
            <person name="Schutz K."/>
            <person name="Huang E."/>
            <person name="Spiegel L."/>
            <person name="Sekhon M."/>
            <person name="Murray J."/>
            <person name="Sheet P."/>
            <person name="Cordes M."/>
            <person name="Abu-Threideh J."/>
            <person name="Stoneking T."/>
            <person name="Kalicki J."/>
            <person name="Graves T."/>
            <person name="Harmon G."/>
            <person name="Edwards J."/>
            <person name="Latreille P."/>
            <person name="Courtney L."/>
            <person name="Cloud J."/>
            <person name="Abbott A."/>
            <person name="Scott K."/>
            <person name="Johnson D."/>
            <person name="Minx P."/>
            <person name="Bentley D."/>
            <person name="Fulton B."/>
            <person name="Miller N."/>
            <person name="Greco T."/>
            <person name="Kemp K."/>
            <person name="Kramer J."/>
            <person name="Fulton L."/>
            <person name="Mardis E."/>
            <person name="Dante M."/>
            <person name="Pepin K."/>
            <person name="Hillier L.W."/>
            <person name="Nelson J."/>
            <person name="Spieth J."/>
            <person name="Ryan E."/>
            <person name="Andrews S."/>
            <person name="Geisel C."/>
            <person name="Layman D."/>
            <person name="Du H."/>
            <person name="Ali J."/>
            <person name="Berghoff A."/>
            <person name="Jones K."/>
            <person name="Drone K."/>
            <person name="Cotton M."/>
            <person name="Joshu C."/>
            <person name="Antonoiu B."/>
            <person name="Zidanic M."/>
            <person name="Strong C."/>
            <person name="Sun H."/>
            <person name="Lamar B."/>
            <person name="Yordan C."/>
            <person name="Ma P."/>
            <person name="Zhong J."/>
            <person name="Preston R."/>
            <person name="Vil D."/>
            <person name="Shekher M."/>
            <person name="Matero A."/>
            <person name="Shah R."/>
            <person name="Swaby I.K."/>
            <person name="O'Shaughnessy A."/>
            <person name="Rodriguez M."/>
            <person name="Hoffman J."/>
            <person name="Till S."/>
            <person name="Granat S."/>
            <person name="Shohdy N."/>
            <person name="Hasegawa A."/>
            <person name="Hameed A."/>
            <person name="Lodhi M."/>
            <person name="Johnson A."/>
            <person name="Chen E."/>
            <person name="Marra M.A."/>
            <person name="Martienssen R."/>
            <person name="McCombie W.R."/>
        </authorList>
    </citation>
    <scope>NUCLEOTIDE SEQUENCE [LARGE SCALE GENOMIC DNA]</scope>
    <source>
        <strain>cv. Columbia</strain>
    </source>
</reference>
<reference key="3">
    <citation type="journal article" date="2017" name="Plant J.">
        <title>Araport11: a complete reannotation of the Arabidopsis thaliana reference genome.</title>
        <authorList>
            <person name="Cheng C.Y."/>
            <person name="Krishnakumar V."/>
            <person name="Chan A.P."/>
            <person name="Thibaud-Nissen F."/>
            <person name="Schobel S."/>
            <person name="Town C.D."/>
        </authorList>
    </citation>
    <scope>GENOME REANNOTATION</scope>
    <source>
        <strain>cv. Columbia</strain>
    </source>
</reference>
<reference key="4">
    <citation type="journal article" date="1996" name="FEBS Lett.">
        <title>Characterization of an Arabidopsis thaliana cDNA encoding an S-adenosylmethionine-sensitive threonine synthase. Threonine synthase from higher plants.</title>
        <authorList>
            <person name="Curien G."/>
            <person name="Dumas R."/>
            <person name="Ravanel S."/>
            <person name="Douce R."/>
        </authorList>
    </citation>
    <scope>NUCLEOTIDE SEQUENCE [MRNA] OF 2-526</scope>
    <scope>CHARACTERIZATION</scope>
    <source>
        <strain>cv. Columbia</strain>
    </source>
</reference>
<reference key="5">
    <citation type="journal article" date="1998" name="Biochemistry">
        <title>Allosteric activation of Arabidopsis threonine synthase by S-adenosylmethionine.</title>
        <authorList>
            <person name="Curien G."/>
            <person name="Job D."/>
            <person name="Douce R."/>
            <person name="Dumas R."/>
        </authorList>
    </citation>
    <scope>CHARACTERIZATION</scope>
</reference>
<reference key="6">
    <citation type="journal article" date="1999" name="Eur. J. Biochem.">
        <title>Characterization of recombinant Arabidopsis thaliana threonine synthase.</title>
        <authorList>
            <person name="Laber B."/>
            <person name="Maurer W."/>
            <person name="Hanke C."/>
            <person name="Graefe S."/>
            <person name="Ehlert S."/>
            <person name="Messerschmidt A."/>
            <person name="Clausen T."/>
        </authorList>
    </citation>
    <scope>FUNCTION</scope>
    <scope>CATALYTIC ACTIVITY</scope>
    <scope>BIOPHYSICOCHEMICAL PROPERTIES</scope>
    <scope>ACTIVITY REGULATION</scope>
    <scope>SUBUNIT</scope>
    <scope>CRYSTALLIZATION</scope>
</reference>
<reference key="7">
    <citation type="journal article" date="2000" name="Plant Physiol.">
        <title>Mutation in the threonine synthase gene results in an over-accumulation of soluble methionine in Arabidopsis.</title>
        <authorList>
            <person name="Bartlem D."/>
            <person name="Lambein I."/>
            <person name="Okamoto T."/>
            <person name="Itaya A."/>
            <person name="Uda Y."/>
            <person name="Kijima F."/>
            <person name="Tamaki Y."/>
            <person name="Nambara E."/>
            <person name="Naito S."/>
        </authorList>
    </citation>
    <scope>MUTAGENESIS OF LEU-205</scope>
</reference>
<reference key="8">
    <citation type="journal article" date="2001" name="Protein Sci.">
        <title>Crystal structure of threonine synthase from Arabidopsis thaliana.</title>
        <authorList>
            <person name="Thomazeau K."/>
            <person name="Curien G."/>
            <person name="Dumas R."/>
            <person name="Biou V."/>
        </authorList>
    </citation>
    <scope>X-RAY CRYSTALLOGRAPHY (2.25 ANGSTROMS) OF 41-526</scope>
    <scope>PYRIDOXAL PHOSPHATE AT LYS-203</scope>
</reference>
<reference key="9">
    <citation type="journal article" date="2006" name="J. Biol. Chem.">
        <title>Allosteric threonine synthase. Reorganization of the pyridoxal phosphate site upon asymmetric activation through S-adenosylmethionine binding to a novel site.</title>
        <authorList>
            <person name="Mas-Droux C."/>
            <person name="Biou V."/>
            <person name="Dumas R."/>
        </authorList>
    </citation>
    <scope>X-RAY CRYSTALLOGRAPHY (2.6 ANGSTROMS) OF 41-526 IN COMPLEX WITH PYRIDOXAL PHOSPHATE AND S-ADENOSYL-L-METHIONINE</scope>
</reference>
<sequence length="526" mass="57777">MASSCLFNASVSSLNPKQDPIRRHRSTSLLRHRPVVISCTADGNNIKAPIETAVKPPHRTEDNIRDEARRNRSNAVNPFSAKYVPFNAAPGSTESYSLDEIVYRSRSGGLLDVEHDMEALKRFDGAYWRDLFDSRVGKSTWPYGSGVWSKKEWVLPEIDDDDIVSAFEGNSNLFWAERFGKQFLGMNDLWVKHCGISHTGSFKDLGMTVLVSQVNRLRKMKRPVVGVGCASTGDTSAALSAYCASAGIPSIVFLPANKISMAQLVQPIANGAFVLSIDTDFDGCMKLIREITAELPIYLANSLNSLRLEGQKTAAIEILQQFDWQVPDWVIVPGGNLGNIYAFYKGFKMCQELGLVDRIPRMVCAQAANANPLYLHYKSGWKDFKPMTASTTFASAIQIGDPVSIDRAVYALKKCNGIVEEATEEELMDAMAQADSTGMFICPHTGVALTALFKLRNQGVIAPTDRTVVVSTAHGLKFTQSKIDYHSNAIPDMACRFSNPPVDVKADFGAVMDVLKSYLGSNTLTS</sequence>
<feature type="transit peptide" description="Chloroplast">
    <location>
        <begin position="1"/>
        <end position="40"/>
    </location>
</feature>
<feature type="chain" id="PRO_0000033617" description="Threonine synthase 1, chloroplastic">
    <location>
        <begin position="41"/>
        <end position="526"/>
    </location>
</feature>
<feature type="binding site">
    <location>
        <begin position="142"/>
        <end position="144"/>
    </location>
    <ligand>
        <name>S-adenosyl-L-methionine</name>
        <dbReference type="ChEBI" id="CHEBI:59789"/>
        <label>1</label>
        <note>ligand shared between dimeric partners</note>
    </ligand>
</feature>
<feature type="binding site">
    <location>
        <begin position="165"/>
        <end position="167"/>
    </location>
    <ligand>
        <name>S-adenosyl-L-methionine</name>
        <dbReference type="ChEBI" id="CHEBI:59789"/>
        <label>1</label>
        <note>ligand shared between dimeric partners</note>
    </ligand>
</feature>
<feature type="binding site" evidence="4">
    <location>
        <position position="172"/>
    </location>
    <ligand>
        <name>S-adenosyl-L-methionine</name>
        <dbReference type="ChEBI" id="CHEBI:59789"/>
        <label>2</label>
        <note>ligand shared between dimeric partners</note>
    </ligand>
</feature>
<feature type="binding site" evidence="4">
    <location>
        <position position="173"/>
    </location>
    <ligand>
        <name>S-adenosyl-L-methionine</name>
        <dbReference type="ChEBI" id="CHEBI:59789"/>
        <label>2</label>
        <note>ligand shared between dimeric partners</note>
    </ligand>
</feature>
<feature type="binding site" description="in monomer B" evidence="4">
    <location>
        <position position="181"/>
    </location>
    <ligand>
        <name>S-adenosyl-L-methionine</name>
        <dbReference type="ChEBI" id="CHEBI:59789"/>
        <label>3</label>
    </ligand>
</feature>
<feature type="binding site" description="in monomer A" evidence="4">
    <location>
        <position position="181"/>
    </location>
    <ligand>
        <name>S-adenosyl-L-methionine</name>
        <dbReference type="ChEBI" id="CHEBI:59789"/>
        <label>4</label>
    </ligand>
</feature>
<feature type="binding site" description="in monomer B" evidence="4">
    <location>
        <position position="187"/>
    </location>
    <ligand>
        <name>S-adenosyl-L-methionine</name>
        <dbReference type="ChEBI" id="CHEBI:59789"/>
        <label>3</label>
    </ligand>
</feature>
<feature type="binding site" evidence="1">
    <location>
        <begin position="335"/>
        <end position="339"/>
    </location>
    <ligand>
        <name>pyridoxal 5'-phosphate</name>
        <dbReference type="ChEBI" id="CHEBI:597326"/>
    </ligand>
</feature>
<feature type="binding site" evidence="1">
    <location>
        <position position="472"/>
    </location>
    <ligand>
        <name>pyridoxal 5'-phosphate</name>
        <dbReference type="ChEBI" id="CHEBI:597326"/>
    </ligand>
</feature>
<feature type="modified residue" description="N6-(pyridoxal phosphate)lysine">
    <location>
        <position position="203"/>
    </location>
</feature>
<feature type="mutagenesis site" description="In mto2-1; causes a strong decrease in the concentration of soluble threonine and over-accumulation of methionine." evidence="3">
    <original>L</original>
    <variation>R</variation>
    <location>
        <position position="205"/>
    </location>
</feature>
<feature type="sequence conflict" description="In Ref. 4; AAB04607." evidence="5" ref="4">
    <original>A</original>
    <variation>L</variation>
    <location>
        <position position="2"/>
    </location>
</feature>
<feature type="helix" evidence="6">
    <location>
        <begin position="60"/>
        <end position="64"/>
    </location>
</feature>
<feature type="strand" evidence="6">
    <location>
        <begin position="81"/>
        <end position="87"/>
    </location>
</feature>
<feature type="turn" evidence="8">
    <location>
        <begin position="106"/>
        <end position="108"/>
    </location>
</feature>
<feature type="strand" evidence="6">
    <location>
        <begin position="110"/>
        <end position="115"/>
    </location>
</feature>
<feature type="helix" evidence="6">
    <location>
        <begin position="117"/>
        <end position="121"/>
    </location>
</feature>
<feature type="helix" evidence="6">
    <location>
        <begin position="125"/>
        <end position="133"/>
    </location>
</feature>
<feature type="turn" evidence="6">
    <location>
        <begin position="134"/>
        <end position="137"/>
    </location>
</feature>
<feature type="turn" evidence="6">
    <location>
        <begin position="141"/>
        <end position="144"/>
    </location>
</feature>
<feature type="helix" evidence="6">
    <location>
        <begin position="148"/>
        <end position="153"/>
    </location>
</feature>
<feature type="helix" evidence="6">
    <location>
        <begin position="160"/>
        <end position="162"/>
    </location>
</feature>
<feature type="strand" evidence="6">
    <location>
        <begin position="173"/>
        <end position="175"/>
    </location>
</feature>
<feature type="helix" evidence="6">
    <location>
        <begin position="177"/>
        <end position="184"/>
    </location>
</feature>
<feature type="strand" evidence="6">
    <location>
        <begin position="187"/>
        <end position="193"/>
    </location>
</feature>
<feature type="strand" evidence="7">
    <location>
        <begin position="196"/>
        <end position="201"/>
    </location>
</feature>
<feature type="helix" evidence="6">
    <location>
        <begin position="204"/>
        <end position="219"/>
    </location>
</feature>
<feature type="strand" evidence="6">
    <location>
        <begin position="226"/>
        <end position="229"/>
    </location>
</feature>
<feature type="helix" evidence="6">
    <location>
        <begin position="234"/>
        <end position="246"/>
    </location>
</feature>
<feature type="strand" evidence="6">
    <location>
        <begin position="250"/>
        <end position="255"/>
    </location>
</feature>
<feature type="helix" evidence="6">
    <location>
        <begin position="256"/>
        <end position="258"/>
    </location>
</feature>
<feature type="helix" evidence="6">
    <location>
        <begin position="261"/>
        <end position="269"/>
    </location>
</feature>
<feature type="strand" evidence="6">
    <location>
        <begin position="273"/>
        <end position="279"/>
    </location>
</feature>
<feature type="helix" evidence="6">
    <location>
        <begin position="281"/>
        <end position="294"/>
    </location>
</feature>
<feature type="strand" evidence="6">
    <location>
        <begin position="297"/>
        <end position="299"/>
    </location>
</feature>
<feature type="helix" evidence="6">
    <location>
        <begin position="300"/>
        <end position="302"/>
    </location>
</feature>
<feature type="helix" evidence="6">
    <location>
        <begin position="304"/>
        <end position="311"/>
    </location>
</feature>
<feature type="helix" evidence="6">
    <location>
        <begin position="313"/>
        <end position="321"/>
    </location>
</feature>
<feature type="turn" evidence="7">
    <location>
        <begin position="322"/>
        <end position="324"/>
    </location>
</feature>
<feature type="strand" evidence="6">
    <location>
        <begin position="328"/>
        <end position="333"/>
    </location>
</feature>
<feature type="strand" evidence="7">
    <location>
        <begin position="335"/>
        <end position="337"/>
    </location>
</feature>
<feature type="helix" evidence="6">
    <location>
        <begin position="338"/>
        <end position="352"/>
    </location>
</feature>
<feature type="strand" evidence="6">
    <location>
        <begin position="355"/>
        <end position="357"/>
    </location>
</feature>
<feature type="strand" evidence="6">
    <location>
        <begin position="361"/>
        <end position="367"/>
    </location>
</feature>
<feature type="helix" evidence="7">
    <location>
        <begin position="368"/>
        <end position="370"/>
    </location>
</feature>
<feature type="helix" evidence="6">
    <location>
        <begin position="373"/>
        <end position="378"/>
    </location>
</feature>
<feature type="turn" evidence="6">
    <location>
        <begin position="379"/>
        <end position="383"/>
    </location>
</feature>
<feature type="helix" evidence="7">
    <location>
        <begin position="395"/>
        <end position="397"/>
    </location>
</feature>
<feature type="helix" evidence="6">
    <location>
        <begin position="406"/>
        <end position="414"/>
    </location>
</feature>
<feature type="strand" evidence="6">
    <location>
        <begin position="418"/>
        <end position="422"/>
    </location>
</feature>
<feature type="helix" evidence="6">
    <location>
        <begin position="424"/>
        <end position="436"/>
    </location>
</feature>
<feature type="helix" evidence="6">
    <location>
        <begin position="443"/>
        <end position="457"/>
    </location>
</feature>
<feature type="strand" evidence="6">
    <location>
        <begin position="467"/>
        <end position="471"/>
    </location>
</feature>
<feature type="helix" evidence="6">
    <location>
        <begin position="475"/>
        <end position="478"/>
    </location>
</feature>
<feature type="helix" evidence="6">
    <location>
        <begin position="479"/>
        <end position="486"/>
    </location>
</feature>
<feature type="strand" evidence="6">
    <location>
        <begin position="502"/>
        <end position="506"/>
    </location>
</feature>
<feature type="helix" evidence="6">
    <location>
        <begin position="508"/>
        <end position="518"/>
    </location>
</feature>
<protein>
    <recommendedName>
        <fullName>Threonine synthase 1, chloroplastic</fullName>
        <ecNumber evidence="2">4.2.3.1</ecNumber>
    </recommendedName>
    <alternativeName>
        <fullName>Protein METHIONINE OVER-ACCUMULATOR 2</fullName>
    </alternativeName>
</protein>
<dbReference type="EC" id="4.2.3.1" evidence="2"/>
<dbReference type="EMBL" id="AB027151">
    <property type="protein sequence ID" value="BAA77707.1"/>
    <property type="molecule type" value="Genomic_DNA"/>
</dbReference>
<dbReference type="EMBL" id="AL050352">
    <property type="protein sequence ID" value="CAB43659.1"/>
    <property type="molecule type" value="Genomic_DNA"/>
</dbReference>
<dbReference type="EMBL" id="AL161575">
    <property type="protein sequence ID" value="CAB79742.1"/>
    <property type="molecule type" value="Genomic_DNA"/>
</dbReference>
<dbReference type="EMBL" id="CP002687">
    <property type="protein sequence ID" value="AEE85684.1"/>
    <property type="molecule type" value="Genomic_DNA"/>
</dbReference>
<dbReference type="EMBL" id="L41666">
    <property type="protein sequence ID" value="AAB04607.1"/>
    <property type="molecule type" value="mRNA"/>
</dbReference>
<dbReference type="PIR" id="T08545">
    <property type="entry name" value="T08545"/>
</dbReference>
<dbReference type="RefSeq" id="NP_194713.1">
    <property type="nucleotide sequence ID" value="NM_119130.3"/>
</dbReference>
<dbReference type="PDB" id="1E5X">
    <property type="method" value="X-ray"/>
    <property type="resolution" value="2.25 A"/>
    <property type="chains" value="A/B=41-526"/>
</dbReference>
<dbReference type="PDB" id="2C2B">
    <property type="method" value="X-ray"/>
    <property type="resolution" value="2.60 A"/>
    <property type="chains" value="A/B/C/D/E/F=41-526"/>
</dbReference>
<dbReference type="PDB" id="2C2G">
    <property type="method" value="X-ray"/>
    <property type="resolution" value="2.61 A"/>
    <property type="chains" value="A/B=41-526"/>
</dbReference>
<dbReference type="PDBsum" id="1E5X"/>
<dbReference type="PDBsum" id="2C2B"/>
<dbReference type="PDBsum" id="2C2G"/>
<dbReference type="SMR" id="Q9S7B5"/>
<dbReference type="BioGRID" id="14393">
    <property type="interactions" value="26"/>
</dbReference>
<dbReference type="FunCoup" id="Q9S7B5">
    <property type="interactions" value="744"/>
</dbReference>
<dbReference type="IntAct" id="Q9S7B5">
    <property type="interactions" value="1"/>
</dbReference>
<dbReference type="STRING" id="3702.Q9S7B5"/>
<dbReference type="iPTMnet" id="Q9S7B5"/>
<dbReference type="MetOSite" id="Q9S7B5"/>
<dbReference type="SwissPalm" id="Q9S7B5"/>
<dbReference type="PaxDb" id="3702-AT4G29840.1"/>
<dbReference type="ProteomicsDB" id="234426"/>
<dbReference type="EnsemblPlants" id="AT4G29840.1">
    <property type="protein sequence ID" value="AT4G29840.1"/>
    <property type="gene ID" value="AT4G29840"/>
</dbReference>
<dbReference type="GeneID" id="829106"/>
<dbReference type="Gramene" id="AT4G29840.1">
    <property type="protein sequence ID" value="AT4G29840.1"/>
    <property type="gene ID" value="AT4G29840"/>
</dbReference>
<dbReference type="KEGG" id="ath:AT4G29840"/>
<dbReference type="Araport" id="AT4G29840"/>
<dbReference type="TAIR" id="AT4G29840">
    <property type="gene designation" value="MTO2"/>
</dbReference>
<dbReference type="eggNOG" id="ENOG502QSQC">
    <property type="taxonomic scope" value="Eukaryota"/>
</dbReference>
<dbReference type="HOGENOM" id="CLU_028142_5_0_1"/>
<dbReference type="InParanoid" id="Q9S7B5"/>
<dbReference type="OMA" id="MWGFQAS"/>
<dbReference type="OrthoDB" id="7773036at2759"/>
<dbReference type="PhylomeDB" id="Q9S7B5"/>
<dbReference type="BRENDA" id="4.2.3.1">
    <property type="organism ID" value="399"/>
</dbReference>
<dbReference type="SABIO-RK" id="Q9S7B5"/>
<dbReference type="UniPathway" id="UPA00050">
    <property type="reaction ID" value="UER00065"/>
</dbReference>
<dbReference type="EvolutionaryTrace" id="Q9S7B5"/>
<dbReference type="PRO" id="PR:Q9S7B5"/>
<dbReference type="Proteomes" id="UP000006548">
    <property type="component" value="Chromosome 4"/>
</dbReference>
<dbReference type="ExpressionAtlas" id="Q9S7B5">
    <property type="expression patterns" value="baseline and differential"/>
</dbReference>
<dbReference type="GO" id="GO:0009507">
    <property type="term" value="C:chloroplast"/>
    <property type="evidence" value="ECO:0007005"/>
    <property type="project" value="TAIR"/>
</dbReference>
<dbReference type="GO" id="GO:0009570">
    <property type="term" value="C:chloroplast stroma"/>
    <property type="evidence" value="ECO:0007005"/>
    <property type="project" value="TAIR"/>
</dbReference>
<dbReference type="GO" id="GO:0005886">
    <property type="term" value="C:plasma membrane"/>
    <property type="evidence" value="ECO:0007005"/>
    <property type="project" value="TAIR"/>
</dbReference>
<dbReference type="GO" id="GO:0030170">
    <property type="term" value="F:pyridoxal phosphate binding"/>
    <property type="evidence" value="ECO:0007669"/>
    <property type="project" value="InterPro"/>
</dbReference>
<dbReference type="GO" id="GO:0004795">
    <property type="term" value="F:threonine synthase activity"/>
    <property type="evidence" value="ECO:0007669"/>
    <property type="project" value="UniProtKB-EC"/>
</dbReference>
<dbReference type="GO" id="GO:0009088">
    <property type="term" value="P:threonine biosynthetic process"/>
    <property type="evidence" value="ECO:0007669"/>
    <property type="project" value="UniProtKB-UniPathway"/>
</dbReference>
<dbReference type="CDD" id="cd01563">
    <property type="entry name" value="Thr-synth_1"/>
    <property type="match status" value="1"/>
</dbReference>
<dbReference type="DisProt" id="DP02754"/>
<dbReference type="FunFam" id="3.40.50.1100:FF:000030">
    <property type="entry name" value="Threonine synthase 1, chloroplastic"/>
    <property type="match status" value="1"/>
</dbReference>
<dbReference type="Gene3D" id="3.40.50.1100">
    <property type="match status" value="2"/>
</dbReference>
<dbReference type="InterPro" id="IPR050214">
    <property type="entry name" value="Cys_Synth/Cystath_Beta-Synth"/>
</dbReference>
<dbReference type="InterPro" id="IPR000634">
    <property type="entry name" value="Ser/Thr_deHydtase_PyrdxlP-BS"/>
</dbReference>
<dbReference type="InterPro" id="IPR004450">
    <property type="entry name" value="Thr_synthase-like"/>
</dbReference>
<dbReference type="InterPro" id="IPR001926">
    <property type="entry name" value="TrpB-like_PALP"/>
</dbReference>
<dbReference type="InterPro" id="IPR036052">
    <property type="entry name" value="TrpB-like_PALP_sf"/>
</dbReference>
<dbReference type="NCBIfam" id="TIGR00260">
    <property type="entry name" value="thrC"/>
    <property type="match status" value="1"/>
</dbReference>
<dbReference type="PANTHER" id="PTHR10314">
    <property type="entry name" value="CYSTATHIONINE BETA-SYNTHASE"/>
    <property type="match status" value="1"/>
</dbReference>
<dbReference type="Pfam" id="PF00291">
    <property type="entry name" value="PALP"/>
    <property type="match status" value="1"/>
</dbReference>
<dbReference type="SUPFAM" id="SSF53686">
    <property type="entry name" value="Tryptophan synthase beta subunit-like PLP-dependent enzymes"/>
    <property type="match status" value="1"/>
</dbReference>
<dbReference type="PROSITE" id="PS00165">
    <property type="entry name" value="DEHYDRATASE_SER_THR"/>
    <property type="match status" value="1"/>
</dbReference>
<keyword id="KW-0002">3D-structure</keyword>
<keyword id="KW-0021">Allosteric enzyme</keyword>
<keyword id="KW-0028">Amino-acid biosynthesis</keyword>
<keyword id="KW-0150">Chloroplast</keyword>
<keyword id="KW-0456">Lyase</keyword>
<keyword id="KW-0934">Plastid</keyword>
<keyword id="KW-0663">Pyridoxal phosphate</keyword>
<keyword id="KW-1185">Reference proteome</keyword>
<keyword id="KW-0949">S-adenosyl-L-methionine</keyword>
<keyword id="KW-0791">Threonine biosynthesis</keyword>
<keyword id="KW-0809">Transit peptide</keyword>
<accession>Q9S7B5</accession>
<accession>Q39144</accession>
<gene>
    <name type="primary">TS1</name>
    <name type="synonym">MTO2</name>
    <name type="ordered locus">At4g29840</name>
    <name type="ORF">F27B13.80</name>
</gene>
<organism>
    <name type="scientific">Arabidopsis thaliana</name>
    <name type="common">Mouse-ear cress</name>
    <dbReference type="NCBI Taxonomy" id="3702"/>
    <lineage>
        <taxon>Eukaryota</taxon>
        <taxon>Viridiplantae</taxon>
        <taxon>Streptophyta</taxon>
        <taxon>Embryophyta</taxon>
        <taxon>Tracheophyta</taxon>
        <taxon>Spermatophyta</taxon>
        <taxon>Magnoliopsida</taxon>
        <taxon>eudicotyledons</taxon>
        <taxon>Gunneridae</taxon>
        <taxon>Pentapetalae</taxon>
        <taxon>rosids</taxon>
        <taxon>malvids</taxon>
        <taxon>Brassicales</taxon>
        <taxon>Brassicaceae</taxon>
        <taxon>Camelineae</taxon>
        <taxon>Arabidopsis</taxon>
    </lineage>
</organism>
<proteinExistence type="evidence at protein level"/>
<evidence type="ECO:0000250" key="1"/>
<evidence type="ECO:0000269" key="2">
    <source>
    </source>
</evidence>
<evidence type="ECO:0000269" key="3">
    <source>
    </source>
</evidence>
<evidence type="ECO:0000269" key="4">
    <source>
    </source>
</evidence>
<evidence type="ECO:0000305" key="5"/>
<evidence type="ECO:0007829" key="6">
    <source>
        <dbReference type="PDB" id="1E5X"/>
    </source>
</evidence>
<evidence type="ECO:0007829" key="7">
    <source>
        <dbReference type="PDB" id="2C2B"/>
    </source>
</evidence>
<evidence type="ECO:0007829" key="8">
    <source>
        <dbReference type="PDB" id="2C2G"/>
    </source>
</evidence>